<accession>Q9LKA1</accession>
<accession>Q8L9D6</accession>
<accession>Q944R0</accession>
<sequence>MNKNPRLDFSSPSSLATISDSADGELNEDDIFAIDISHAPPQARHSPVSSPAKQQTPARQLQRSKSGLKNVEASGILAALPESSGSSSYLSHVFHHKPAAALSTSVSSTASSSSSSGGGASAGSSSSARAIPTAPKPPQERLPFSASFVGGGKYPQSAPVQVPLVSSAMMNRHKKEFKLTDVVDDDEEEEEGEMLPPHEIVARSLAQSSLLSCSVLEGAGRTLKGRDLRQVRNAVFRRTGFID</sequence>
<proteinExistence type="evidence at protein level"/>
<name>S407_ARATH</name>
<dbReference type="EMBL" id="AP000370">
    <property type="protein sequence ID" value="BAA97067.1"/>
    <property type="molecule type" value="Genomic_DNA"/>
</dbReference>
<dbReference type="EMBL" id="CP002686">
    <property type="protein sequence ID" value="AEE75609.1"/>
    <property type="molecule type" value="Genomic_DNA"/>
</dbReference>
<dbReference type="EMBL" id="AF424599">
    <property type="protein sequence ID" value="AAL11593.1"/>
    <property type="molecule type" value="mRNA"/>
</dbReference>
<dbReference type="EMBL" id="BT024462">
    <property type="protein sequence ID" value="ABD19643.1"/>
    <property type="molecule type" value="mRNA"/>
</dbReference>
<dbReference type="EMBL" id="AY088491">
    <property type="protein sequence ID" value="AAM66027.1"/>
    <property type="molecule type" value="mRNA"/>
</dbReference>
<dbReference type="RefSeq" id="NP_566497.1">
    <property type="nucleotide sequence ID" value="NM_112366.4"/>
</dbReference>
<dbReference type="FunCoup" id="Q9LKA1">
    <property type="interactions" value="1025"/>
</dbReference>
<dbReference type="IntAct" id="Q9LKA1">
    <property type="interactions" value="2"/>
</dbReference>
<dbReference type="STRING" id="3702.Q9LKA1"/>
<dbReference type="iPTMnet" id="Q9LKA1"/>
<dbReference type="PaxDb" id="3702-AT3G15040.1"/>
<dbReference type="ProteomicsDB" id="175483"/>
<dbReference type="EnsemblPlants" id="AT3G15040.1">
    <property type="protein sequence ID" value="AT3G15040.1"/>
    <property type="gene ID" value="AT3G15040"/>
</dbReference>
<dbReference type="GeneID" id="820733"/>
<dbReference type="Gramene" id="AT3G15040.1">
    <property type="protein sequence ID" value="AT3G15040.1"/>
    <property type="gene ID" value="AT3G15040"/>
</dbReference>
<dbReference type="KEGG" id="ath:AT3G15040"/>
<dbReference type="Araport" id="AT3G15040"/>
<dbReference type="TAIR" id="AT3G15040"/>
<dbReference type="eggNOG" id="ENOG502S1K1">
    <property type="taxonomic scope" value="Eukaryota"/>
</dbReference>
<dbReference type="HOGENOM" id="CLU_088831_0_1_1"/>
<dbReference type="InParanoid" id="Q9LKA1"/>
<dbReference type="OMA" id="ISHAPRQ"/>
<dbReference type="PRO" id="PR:Q9LKA1"/>
<dbReference type="Proteomes" id="UP000006548">
    <property type="component" value="Chromosome 3"/>
</dbReference>
<dbReference type="ExpressionAtlas" id="Q9LKA1">
    <property type="expression patterns" value="baseline and differential"/>
</dbReference>
<dbReference type="GO" id="GO:0005737">
    <property type="term" value="C:cytoplasm"/>
    <property type="evidence" value="ECO:0000314"/>
    <property type="project" value="UniProtKB"/>
</dbReference>
<dbReference type="GO" id="GO:0010150">
    <property type="term" value="P:leaf senescence"/>
    <property type="evidence" value="ECO:0000270"/>
    <property type="project" value="UniProtKB"/>
</dbReference>
<dbReference type="GO" id="GO:0009737">
    <property type="term" value="P:response to abscisic acid"/>
    <property type="evidence" value="ECO:0000270"/>
    <property type="project" value="UniProtKB"/>
</dbReference>
<dbReference type="GO" id="GO:0009751">
    <property type="term" value="P:response to salicylic acid"/>
    <property type="evidence" value="ECO:0000270"/>
    <property type="project" value="UniProtKB"/>
</dbReference>
<dbReference type="InterPro" id="IPR007608">
    <property type="entry name" value="Senescence_reg_S40"/>
</dbReference>
<dbReference type="PANTHER" id="PTHR33083">
    <property type="entry name" value="EXPRESSED PROTEIN"/>
    <property type="match status" value="1"/>
</dbReference>
<dbReference type="PANTHER" id="PTHR33083:SF50">
    <property type="entry name" value="PROTEIN S40-7"/>
    <property type="match status" value="1"/>
</dbReference>
<dbReference type="Pfam" id="PF04520">
    <property type="entry name" value="Senescence_reg"/>
    <property type="match status" value="1"/>
</dbReference>
<feature type="chain" id="PRO_0000457295" description="Protein S40-7">
    <location>
        <begin position="1"/>
        <end position="243"/>
    </location>
</feature>
<feature type="region of interest" description="Disordered" evidence="1">
    <location>
        <begin position="1"/>
        <end position="68"/>
    </location>
</feature>
<feature type="region of interest" description="Disordered" evidence="1">
    <location>
        <begin position="107"/>
        <end position="143"/>
    </location>
</feature>
<feature type="compositionally biased region" description="Polar residues" evidence="1">
    <location>
        <begin position="10"/>
        <end position="20"/>
    </location>
</feature>
<feature type="compositionally biased region" description="Acidic residues" evidence="1">
    <location>
        <begin position="22"/>
        <end position="32"/>
    </location>
</feature>
<feature type="compositionally biased region" description="Polar residues" evidence="1">
    <location>
        <begin position="47"/>
        <end position="67"/>
    </location>
</feature>
<feature type="sequence conflict" description="In Ref. 5; AAM66027." evidence="4" ref="5">
    <original>S</original>
    <variation>N</variation>
    <location>
        <position position="86"/>
    </location>
</feature>
<feature type="sequence conflict" description="In Ref. 5; AAM66027." evidence="4" ref="5">
    <original>G</original>
    <variation>A</variation>
    <location>
        <position position="123"/>
    </location>
</feature>
<feature type="sequence conflict" description="In Ref. 3; AAL11593." evidence="4" ref="3">
    <original>K</original>
    <variation>N</variation>
    <location>
        <position position="174"/>
    </location>
</feature>
<protein>
    <recommendedName>
        <fullName evidence="3">Protein S40-7</fullName>
        <shortName evidence="3">AtS40-7</shortName>
    </recommendedName>
</protein>
<comment type="subcellular location">
    <subcellularLocation>
        <location evidence="2">Cytoplasm</location>
    </subcellularLocation>
</comment>
<comment type="developmental stage">
    <text evidence="2">Accumulates during senescence.</text>
</comment>
<comment type="induction">
    <text evidence="2">Slightly induced by abscisic acid (ABA) and salicylic acid (SA).</text>
</comment>
<comment type="similarity">
    <text evidence="4">Belongs to the senescence regulator S40 family.</text>
</comment>
<gene>
    <name evidence="3" type="primary">S40-7</name>
    <name evidence="5" type="ordered locus">At3g15040</name>
    <name evidence="6" type="ORF">K15M2.18</name>
</gene>
<evidence type="ECO:0000256" key="1">
    <source>
        <dbReference type="SAM" id="MobiDB-lite"/>
    </source>
</evidence>
<evidence type="ECO:0000269" key="2">
    <source>
    </source>
</evidence>
<evidence type="ECO:0000303" key="3">
    <source>
    </source>
</evidence>
<evidence type="ECO:0000305" key="4"/>
<evidence type="ECO:0000312" key="5">
    <source>
        <dbReference type="Araport" id="AT3G15040"/>
    </source>
</evidence>
<evidence type="ECO:0000312" key="6">
    <source>
        <dbReference type="EMBL" id="BAA97067.1"/>
    </source>
</evidence>
<organism>
    <name type="scientific">Arabidopsis thaliana</name>
    <name type="common">Mouse-ear cress</name>
    <dbReference type="NCBI Taxonomy" id="3702"/>
    <lineage>
        <taxon>Eukaryota</taxon>
        <taxon>Viridiplantae</taxon>
        <taxon>Streptophyta</taxon>
        <taxon>Embryophyta</taxon>
        <taxon>Tracheophyta</taxon>
        <taxon>Spermatophyta</taxon>
        <taxon>Magnoliopsida</taxon>
        <taxon>eudicotyledons</taxon>
        <taxon>Gunneridae</taxon>
        <taxon>Pentapetalae</taxon>
        <taxon>rosids</taxon>
        <taxon>malvids</taxon>
        <taxon>Brassicales</taxon>
        <taxon>Brassicaceae</taxon>
        <taxon>Camelineae</taxon>
        <taxon>Arabidopsis</taxon>
    </lineage>
</organism>
<reference key="1">
    <citation type="journal article" date="2000" name="DNA Res.">
        <title>Structural analysis of Arabidopsis thaliana chromosome 3. II. Sequence features of the 4,251,695 bp regions covered by 90 P1, TAC and BAC clones.</title>
        <authorList>
            <person name="Kaneko T."/>
            <person name="Katoh T."/>
            <person name="Sato S."/>
            <person name="Nakamura Y."/>
            <person name="Asamizu E."/>
            <person name="Tabata S."/>
        </authorList>
    </citation>
    <scope>NUCLEOTIDE SEQUENCE [LARGE SCALE GENOMIC DNA]</scope>
    <source>
        <strain>cv. Columbia</strain>
    </source>
</reference>
<reference key="2">
    <citation type="journal article" date="2017" name="Plant J.">
        <title>Araport11: a complete reannotation of the Arabidopsis thaliana reference genome.</title>
        <authorList>
            <person name="Cheng C.Y."/>
            <person name="Krishnakumar V."/>
            <person name="Chan A.P."/>
            <person name="Thibaud-Nissen F."/>
            <person name="Schobel S."/>
            <person name="Town C.D."/>
        </authorList>
    </citation>
    <scope>GENOME REANNOTATION</scope>
    <source>
        <strain>cv. Columbia</strain>
    </source>
</reference>
<reference key="3">
    <citation type="journal article" date="2003" name="Science">
        <title>Empirical analysis of transcriptional activity in the Arabidopsis genome.</title>
        <authorList>
            <person name="Yamada K."/>
            <person name="Lim J."/>
            <person name="Dale J.M."/>
            <person name="Chen H."/>
            <person name="Shinn P."/>
            <person name="Palm C.J."/>
            <person name="Southwick A.M."/>
            <person name="Wu H.C."/>
            <person name="Kim C.J."/>
            <person name="Nguyen M."/>
            <person name="Pham P.K."/>
            <person name="Cheuk R.F."/>
            <person name="Karlin-Newmann G."/>
            <person name="Liu S.X."/>
            <person name="Lam B."/>
            <person name="Sakano H."/>
            <person name="Wu T."/>
            <person name="Yu G."/>
            <person name="Miranda M."/>
            <person name="Quach H.L."/>
            <person name="Tripp M."/>
            <person name="Chang C.H."/>
            <person name="Lee J.M."/>
            <person name="Toriumi M.J."/>
            <person name="Chan M.M."/>
            <person name="Tang C.C."/>
            <person name="Onodera C.S."/>
            <person name="Deng J.M."/>
            <person name="Akiyama K."/>
            <person name="Ansari Y."/>
            <person name="Arakawa T."/>
            <person name="Banh J."/>
            <person name="Banno F."/>
            <person name="Bowser L."/>
            <person name="Brooks S.Y."/>
            <person name="Carninci P."/>
            <person name="Chao Q."/>
            <person name="Choy N."/>
            <person name="Enju A."/>
            <person name="Goldsmith A.D."/>
            <person name="Gurjal M."/>
            <person name="Hansen N.F."/>
            <person name="Hayashizaki Y."/>
            <person name="Johnson-Hopson C."/>
            <person name="Hsuan V.W."/>
            <person name="Iida K."/>
            <person name="Karnes M."/>
            <person name="Khan S."/>
            <person name="Koesema E."/>
            <person name="Ishida J."/>
            <person name="Jiang P.X."/>
            <person name="Jones T."/>
            <person name="Kawai J."/>
            <person name="Kamiya A."/>
            <person name="Meyers C."/>
            <person name="Nakajima M."/>
            <person name="Narusaka M."/>
            <person name="Seki M."/>
            <person name="Sakurai T."/>
            <person name="Satou M."/>
            <person name="Tamse R."/>
            <person name="Vaysberg M."/>
            <person name="Wallender E.K."/>
            <person name="Wong C."/>
            <person name="Yamamura Y."/>
            <person name="Yuan S."/>
            <person name="Shinozaki K."/>
            <person name="Davis R.W."/>
            <person name="Theologis A."/>
            <person name="Ecker J.R."/>
        </authorList>
    </citation>
    <scope>NUCLEOTIDE SEQUENCE [LARGE SCALE MRNA]</scope>
    <source>
        <strain>cv. Columbia</strain>
    </source>
</reference>
<reference key="4">
    <citation type="submission" date="2006-02" db="EMBL/GenBank/DDBJ databases">
        <title>Arabidopsis ORF clones.</title>
        <authorList>
            <person name="Shinn P."/>
            <person name="Chen H."/>
            <person name="Kim C.J."/>
            <person name="Ecker J.R."/>
        </authorList>
    </citation>
    <scope>NUCLEOTIDE SEQUENCE [LARGE SCALE MRNA]</scope>
    <source>
        <strain>cv. Columbia</strain>
    </source>
</reference>
<reference key="5">
    <citation type="submission" date="2002-03" db="EMBL/GenBank/DDBJ databases">
        <title>Full-length cDNA from Arabidopsis thaliana.</title>
        <authorList>
            <person name="Brover V.V."/>
            <person name="Troukhan M.E."/>
            <person name="Alexandrov N.A."/>
            <person name="Lu Y.-P."/>
            <person name="Flavell R.B."/>
            <person name="Feldmann K.A."/>
        </authorList>
    </citation>
    <scope>NUCLEOTIDE SEQUENCE [LARGE SCALE MRNA]</scope>
</reference>
<reference key="6">
    <citation type="journal article" date="2009" name="Plant Physiol.">
        <title>Large-scale Arabidopsis phosphoproteome profiling reveals novel chloroplast kinase substrates and phosphorylation networks.</title>
        <authorList>
            <person name="Reiland S."/>
            <person name="Messerli G."/>
            <person name="Baerenfaller K."/>
            <person name="Gerrits B."/>
            <person name="Endler A."/>
            <person name="Grossmann J."/>
            <person name="Gruissem W."/>
            <person name="Baginsky S."/>
        </authorList>
    </citation>
    <scope>IDENTIFICATION BY MASS SPECTROMETRY [LARGE SCALE ANALYSIS]</scope>
</reference>
<reference key="7">
    <citation type="journal article" date="2010" name="Plant Mol. Biol.">
        <title>Nuclear targeted AtS40 modulates senescence associated gene expression in Arabidopsis thaliana during natural development and in darkness.</title>
        <authorList>
            <person name="Fischer-Kilbienski I."/>
            <person name="Miao Y."/>
            <person name="Roitsch T."/>
            <person name="Zschiesche W."/>
            <person name="Humbeck K."/>
            <person name="Krupinska K."/>
        </authorList>
    </citation>
    <scope>DEVELOPMENTAL STAGE</scope>
    <scope>INDUCTION BY ABSCISIC ACID AND SALICYLIC ACID</scope>
    <scope>SUBCELLULAR LOCATION</scope>
    <scope>GENE FAMILY</scope>
    <scope>NOMENCLATURE</scope>
    <source>
        <strain>cv. Columbia</strain>
    </source>
</reference>
<keyword id="KW-0963">Cytoplasm</keyword>
<keyword id="KW-1185">Reference proteome</keyword>